<keyword id="KW-0687">Ribonucleoprotein</keyword>
<keyword id="KW-0689">Ribosomal protein</keyword>
<protein>
    <recommendedName>
        <fullName evidence="1">Large ribosomal subunit protein bL17</fullName>
    </recommendedName>
    <alternativeName>
        <fullName evidence="2">50S ribosomal protein L17</fullName>
    </alternativeName>
</protein>
<gene>
    <name evidence="1" type="primary">rplQ</name>
    <name type="ordered locus">CTN_1022</name>
</gene>
<proteinExistence type="inferred from homology"/>
<sequence>MRHRMKRHKLGRYGSHRRSLLRNLSREIVEHGSIVTTTAKAKALKTFMDKLVSKAIEAATTEDRARSVHLRRQINAVLGDRRLTNKLVDEIAKNYVGRRGGYVRVLRIGFRRGDAAEMSLVQLVEASSQEG</sequence>
<dbReference type="EMBL" id="CP000916">
    <property type="protein sequence ID" value="ACM23198.1"/>
    <property type="molecule type" value="Genomic_DNA"/>
</dbReference>
<dbReference type="RefSeq" id="WP_015919514.1">
    <property type="nucleotide sequence ID" value="NC_011978.1"/>
</dbReference>
<dbReference type="SMR" id="B9K8B5"/>
<dbReference type="STRING" id="309803.CTN_1022"/>
<dbReference type="KEGG" id="tna:CTN_1022"/>
<dbReference type="eggNOG" id="COG0203">
    <property type="taxonomic scope" value="Bacteria"/>
</dbReference>
<dbReference type="HOGENOM" id="CLU_074407_2_0_0"/>
<dbReference type="Proteomes" id="UP000000445">
    <property type="component" value="Chromosome"/>
</dbReference>
<dbReference type="GO" id="GO:0022625">
    <property type="term" value="C:cytosolic large ribosomal subunit"/>
    <property type="evidence" value="ECO:0007669"/>
    <property type="project" value="TreeGrafter"/>
</dbReference>
<dbReference type="GO" id="GO:0003735">
    <property type="term" value="F:structural constituent of ribosome"/>
    <property type="evidence" value="ECO:0007669"/>
    <property type="project" value="InterPro"/>
</dbReference>
<dbReference type="GO" id="GO:0006412">
    <property type="term" value="P:translation"/>
    <property type="evidence" value="ECO:0007669"/>
    <property type="project" value="UniProtKB-UniRule"/>
</dbReference>
<dbReference type="Gene3D" id="3.90.1030.10">
    <property type="entry name" value="Ribosomal protein L17"/>
    <property type="match status" value="1"/>
</dbReference>
<dbReference type="HAMAP" id="MF_01368">
    <property type="entry name" value="Ribosomal_bL17"/>
    <property type="match status" value="1"/>
</dbReference>
<dbReference type="InterPro" id="IPR000456">
    <property type="entry name" value="Ribosomal_bL17"/>
</dbReference>
<dbReference type="InterPro" id="IPR036373">
    <property type="entry name" value="Ribosomal_bL17_sf"/>
</dbReference>
<dbReference type="NCBIfam" id="TIGR00059">
    <property type="entry name" value="L17"/>
    <property type="match status" value="1"/>
</dbReference>
<dbReference type="PANTHER" id="PTHR14413:SF16">
    <property type="entry name" value="LARGE RIBOSOMAL SUBUNIT PROTEIN BL17M"/>
    <property type="match status" value="1"/>
</dbReference>
<dbReference type="PANTHER" id="PTHR14413">
    <property type="entry name" value="RIBOSOMAL PROTEIN L17"/>
    <property type="match status" value="1"/>
</dbReference>
<dbReference type="Pfam" id="PF01196">
    <property type="entry name" value="Ribosomal_L17"/>
    <property type="match status" value="1"/>
</dbReference>
<dbReference type="SUPFAM" id="SSF64263">
    <property type="entry name" value="Prokaryotic ribosomal protein L17"/>
    <property type="match status" value="1"/>
</dbReference>
<feature type="chain" id="PRO_1000184051" description="Large ribosomal subunit protein bL17">
    <location>
        <begin position="1"/>
        <end position="131"/>
    </location>
</feature>
<organism>
    <name type="scientific">Thermotoga neapolitana (strain ATCC 49049 / DSM 4359 / NBRC 107923 / NS-E)</name>
    <dbReference type="NCBI Taxonomy" id="309803"/>
    <lineage>
        <taxon>Bacteria</taxon>
        <taxon>Thermotogati</taxon>
        <taxon>Thermotogota</taxon>
        <taxon>Thermotogae</taxon>
        <taxon>Thermotogales</taxon>
        <taxon>Thermotogaceae</taxon>
        <taxon>Thermotoga</taxon>
    </lineage>
</organism>
<accession>B9K8B5</accession>
<name>RL17_THENN</name>
<evidence type="ECO:0000255" key="1">
    <source>
        <dbReference type="HAMAP-Rule" id="MF_01368"/>
    </source>
</evidence>
<evidence type="ECO:0000305" key="2"/>
<comment type="subunit">
    <text evidence="1">Part of the 50S ribosomal subunit. Contacts protein L32.</text>
</comment>
<comment type="similarity">
    <text evidence="1">Belongs to the bacterial ribosomal protein bL17 family.</text>
</comment>
<reference key="1">
    <citation type="submission" date="2007-11" db="EMBL/GenBank/DDBJ databases">
        <title>The genome sequence of the hyperthermophilic bacterium Thermotoga neapolitana.</title>
        <authorList>
            <person name="Lim S.K."/>
            <person name="Kim J.S."/>
            <person name="Cha S.H."/>
            <person name="Park B.C."/>
            <person name="Lee D.S."/>
            <person name="Tae H.S."/>
            <person name="Kim S.-J."/>
            <person name="Kim J.J."/>
            <person name="Park K.J."/>
            <person name="Lee S.Y."/>
        </authorList>
    </citation>
    <scope>NUCLEOTIDE SEQUENCE [LARGE SCALE GENOMIC DNA]</scope>
    <source>
        <strain>ATCC 49049 / DSM 4359 / NBRC 107923 / NS-E</strain>
    </source>
</reference>